<organism>
    <name type="scientific">Schizosaccharomyces pombe (strain 972 / ATCC 24843)</name>
    <name type="common">Fission yeast</name>
    <dbReference type="NCBI Taxonomy" id="284812"/>
    <lineage>
        <taxon>Eukaryota</taxon>
        <taxon>Fungi</taxon>
        <taxon>Dikarya</taxon>
        <taxon>Ascomycota</taxon>
        <taxon>Taphrinomycotina</taxon>
        <taxon>Schizosaccharomycetes</taxon>
        <taxon>Schizosaccharomycetales</taxon>
        <taxon>Schizosaccharomycetaceae</taxon>
        <taxon>Schizosaccharomyces</taxon>
    </lineage>
</organism>
<evidence type="ECO:0000255" key="1">
    <source>
        <dbReference type="PROSITE-ProRule" id="PRU00227"/>
    </source>
</evidence>
<evidence type="ECO:0000256" key="2">
    <source>
        <dbReference type="SAM" id="MobiDB-lite"/>
    </source>
</evidence>
<evidence type="ECO:0000269" key="3">
    <source>
    </source>
</evidence>
<reference key="1">
    <citation type="journal article" date="2002" name="Nature">
        <title>The genome sequence of Schizosaccharomyces pombe.</title>
        <authorList>
            <person name="Wood V."/>
            <person name="Gwilliam R."/>
            <person name="Rajandream M.A."/>
            <person name="Lyne M.H."/>
            <person name="Lyne R."/>
            <person name="Stewart A."/>
            <person name="Sgouros J.G."/>
            <person name="Peat N."/>
            <person name="Hayles J."/>
            <person name="Baker S.G."/>
            <person name="Basham D."/>
            <person name="Bowman S."/>
            <person name="Brooks K."/>
            <person name="Brown D."/>
            <person name="Brown S."/>
            <person name="Chillingworth T."/>
            <person name="Churcher C.M."/>
            <person name="Collins M."/>
            <person name="Connor R."/>
            <person name="Cronin A."/>
            <person name="Davis P."/>
            <person name="Feltwell T."/>
            <person name="Fraser A."/>
            <person name="Gentles S."/>
            <person name="Goble A."/>
            <person name="Hamlin N."/>
            <person name="Harris D.E."/>
            <person name="Hidalgo J."/>
            <person name="Hodgson G."/>
            <person name="Holroyd S."/>
            <person name="Hornsby T."/>
            <person name="Howarth S."/>
            <person name="Huckle E.J."/>
            <person name="Hunt S."/>
            <person name="Jagels K."/>
            <person name="James K.D."/>
            <person name="Jones L."/>
            <person name="Jones M."/>
            <person name="Leather S."/>
            <person name="McDonald S."/>
            <person name="McLean J."/>
            <person name="Mooney P."/>
            <person name="Moule S."/>
            <person name="Mungall K.L."/>
            <person name="Murphy L.D."/>
            <person name="Niblett D."/>
            <person name="Odell C."/>
            <person name="Oliver K."/>
            <person name="O'Neil S."/>
            <person name="Pearson D."/>
            <person name="Quail M.A."/>
            <person name="Rabbinowitsch E."/>
            <person name="Rutherford K.M."/>
            <person name="Rutter S."/>
            <person name="Saunders D."/>
            <person name="Seeger K."/>
            <person name="Sharp S."/>
            <person name="Skelton J."/>
            <person name="Simmonds M.N."/>
            <person name="Squares R."/>
            <person name="Squares S."/>
            <person name="Stevens K."/>
            <person name="Taylor K."/>
            <person name="Taylor R.G."/>
            <person name="Tivey A."/>
            <person name="Walsh S.V."/>
            <person name="Warren T."/>
            <person name="Whitehead S."/>
            <person name="Woodward J.R."/>
            <person name="Volckaert G."/>
            <person name="Aert R."/>
            <person name="Robben J."/>
            <person name="Grymonprez B."/>
            <person name="Weltjens I."/>
            <person name="Vanstreels E."/>
            <person name="Rieger M."/>
            <person name="Schaefer M."/>
            <person name="Mueller-Auer S."/>
            <person name="Gabel C."/>
            <person name="Fuchs M."/>
            <person name="Duesterhoeft A."/>
            <person name="Fritzc C."/>
            <person name="Holzer E."/>
            <person name="Moestl D."/>
            <person name="Hilbert H."/>
            <person name="Borzym K."/>
            <person name="Langer I."/>
            <person name="Beck A."/>
            <person name="Lehrach H."/>
            <person name="Reinhardt R."/>
            <person name="Pohl T.M."/>
            <person name="Eger P."/>
            <person name="Zimmermann W."/>
            <person name="Wedler H."/>
            <person name="Wambutt R."/>
            <person name="Purnelle B."/>
            <person name="Goffeau A."/>
            <person name="Cadieu E."/>
            <person name="Dreano S."/>
            <person name="Gloux S."/>
            <person name="Lelaure V."/>
            <person name="Mottier S."/>
            <person name="Galibert F."/>
            <person name="Aves S.J."/>
            <person name="Xiang Z."/>
            <person name="Hunt C."/>
            <person name="Moore K."/>
            <person name="Hurst S.M."/>
            <person name="Lucas M."/>
            <person name="Rochet M."/>
            <person name="Gaillardin C."/>
            <person name="Tallada V.A."/>
            <person name="Garzon A."/>
            <person name="Thode G."/>
            <person name="Daga R.R."/>
            <person name="Cruzado L."/>
            <person name="Jimenez J."/>
            <person name="Sanchez M."/>
            <person name="del Rey F."/>
            <person name="Benito J."/>
            <person name="Dominguez A."/>
            <person name="Revuelta J.L."/>
            <person name="Moreno S."/>
            <person name="Armstrong J."/>
            <person name="Forsburg S.L."/>
            <person name="Cerutti L."/>
            <person name="Lowe T."/>
            <person name="McCombie W.R."/>
            <person name="Paulsen I."/>
            <person name="Potashkin J."/>
            <person name="Shpakovski G.V."/>
            <person name="Ussery D."/>
            <person name="Barrell B.G."/>
            <person name="Nurse P."/>
        </authorList>
    </citation>
    <scope>NUCLEOTIDE SEQUENCE [LARGE SCALE GENOMIC DNA]</scope>
    <source>
        <strain>972 / ATCC 24843</strain>
    </source>
</reference>
<reference key="2">
    <citation type="journal article" date="2006" name="Nat. Biotechnol.">
        <title>ORFeome cloning and global analysis of protein localization in the fission yeast Schizosaccharomyces pombe.</title>
        <authorList>
            <person name="Matsuyama A."/>
            <person name="Arai R."/>
            <person name="Yashiroda Y."/>
            <person name="Shirai A."/>
            <person name="Kamata A."/>
            <person name="Sekido S."/>
            <person name="Kobayashi Y."/>
            <person name="Hashimoto A."/>
            <person name="Hamamoto M."/>
            <person name="Hiraoka Y."/>
            <person name="Horinouchi S."/>
            <person name="Yoshida M."/>
        </authorList>
    </citation>
    <scope>SUBCELLULAR LOCATION [LARGE SCALE ANALYSIS]</scope>
</reference>
<proteinExistence type="inferred from homology"/>
<protein>
    <recommendedName>
        <fullName>Uncharacterized transcriptional regulatory protein C320.03</fullName>
    </recommendedName>
</protein>
<accession>O59780</accession>
<sequence>MDLNTLPFHSINSVNVSSAPTVNERSYPFLLDASAGVSGFNPVVSSPEKKARMKYKKNSTSPNMDVKSRKKVSRACDFCRQKKIRCDMDQSPRPGNACINCRKHHLDCNFTRTPLKRGPAKGFNRNADEKQKRASGSAKSSSPAVNGSVFSGNEASPSSRAPSITPVDSVNTTTSAIQVPSVTLTAPAPLGVDQKISQDQKPDSWLTYNAQFAQNSPQLAPSIPSPMKLSPANQQAMPPYPQMLGPGSISSYTNSNLGPSAGFRPPTFFSSPSPQPYSGPILASTAPTLDGSYLSNPSNSNPAVMSLSSNFPSPPKPNNPVYLPPRGNPTVNDRVSNVLPSITSFDSSVTTVPSNSPATLNSYTTSVPSGMSRHPMLMNPSTPEPSLGVNSPSLRPLQSLNNVQNSYRVASTQAPPPHPLRNYTSDAESISMRSKSTQASDAATFREVEQLYQENVEWDDAAIDRYYLLIHSTLPILHHSKARLKSELEKAPINLRSSCLHAIYSLVNRPPFATLGHVFHNTPMKAIGLLNLICSNVQDLSNRILHLQTMILLAIESDQRGPTTITGRNGLPQGMWLGAAIGLACNMRLHIQSHLSLQSINEDMDSDEALCRRAWWVLVVLDRWHSMSTCSPLFLPETFINLTIQDQKLLGTFPSQLVRLSLIVGHISDVFQSPDPTDRQSPIVTQQLRSEIDAFRQSVDVVWGQMNLLTLAVTHVKVLLELCINARPSTVLVPAMKMATILSSSSTPMTPLNHHFFSLATCVLIGVFDLPELQNEARRGLEHIRECIEKRRDIVSREDHEDWDYIVLKLINAKMQGMPINSDPSIPPHVPPSSAFAYSNQEMDSATFKDAYLYTRLCNLGYLGFLI</sequence>
<feature type="chain" id="PRO_0000310377" description="Uncharacterized transcriptional regulatory protein C320.03">
    <location>
        <begin position="1"/>
        <end position="867"/>
    </location>
</feature>
<feature type="DNA-binding region" description="Zn(2)-C6 fungal-type" evidence="1">
    <location>
        <begin position="76"/>
        <end position="108"/>
    </location>
</feature>
<feature type="region of interest" description="Disordered" evidence="2">
    <location>
        <begin position="110"/>
        <end position="167"/>
    </location>
</feature>
<feature type="region of interest" description="Disordered" evidence="2">
    <location>
        <begin position="217"/>
        <end position="257"/>
    </location>
</feature>
<feature type="compositionally biased region" description="Polar residues" evidence="2">
    <location>
        <begin position="137"/>
        <end position="167"/>
    </location>
</feature>
<feature type="compositionally biased region" description="Polar residues" evidence="2">
    <location>
        <begin position="248"/>
        <end position="257"/>
    </location>
</feature>
<keyword id="KW-0238">DNA-binding</keyword>
<keyword id="KW-0479">Metal-binding</keyword>
<keyword id="KW-0539">Nucleus</keyword>
<keyword id="KW-1185">Reference proteome</keyword>
<keyword id="KW-0804">Transcription</keyword>
<keyword id="KW-0805">Transcription regulation</keyword>
<keyword id="KW-0862">Zinc</keyword>
<comment type="subcellular location">
    <subcellularLocation>
        <location evidence="1 3">Nucleus</location>
    </subcellularLocation>
</comment>
<gene>
    <name type="ORF">SPCC320.03</name>
</gene>
<name>YCN3_SCHPO</name>
<dbReference type="EMBL" id="CU329672">
    <property type="protein sequence ID" value="CAA18305.1"/>
    <property type="molecule type" value="Genomic_DNA"/>
</dbReference>
<dbReference type="PIR" id="T41308">
    <property type="entry name" value="T41308"/>
</dbReference>
<dbReference type="RefSeq" id="NP_587726.1">
    <property type="nucleotide sequence ID" value="NM_001022721.2"/>
</dbReference>
<dbReference type="BioGRID" id="275523">
    <property type="interactions" value="14"/>
</dbReference>
<dbReference type="FunCoup" id="O59780">
    <property type="interactions" value="276"/>
</dbReference>
<dbReference type="STRING" id="284812.O59780"/>
<dbReference type="iPTMnet" id="O59780"/>
<dbReference type="PaxDb" id="4896-SPCC320.03.1"/>
<dbReference type="EnsemblFungi" id="SPCC320.03.1">
    <property type="protein sequence ID" value="SPCC320.03.1:pep"/>
    <property type="gene ID" value="SPCC320.03"/>
</dbReference>
<dbReference type="KEGG" id="spo:2538949"/>
<dbReference type="PomBase" id="SPCC320.03"/>
<dbReference type="VEuPathDB" id="FungiDB:SPCC320.03"/>
<dbReference type="eggNOG" id="ENOG502QRVJ">
    <property type="taxonomic scope" value="Eukaryota"/>
</dbReference>
<dbReference type="HOGENOM" id="CLU_323415_0_0_1"/>
<dbReference type="InParanoid" id="O59780"/>
<dbReference type="OMA" id="PAMKMAN"/>
<dbReference type="PhylomeDB" id="O59780"/>
<dbReference type="PRO" id="PR:O59780"/>
<dbReference type="Proteomes" id="UP000002485">
    <property type="component" value="Chromosome III"/>
</dbReference>
<dbReference type="GO" id="GO:0005634">
    <property type="term" value="C:nucleus"/>
    <property type="evidence" value="ECO:0007005"/>
    <property type="project" value="PomBase"/>
</dbReference>
<dbReference type="GO" id="GO:0000981">
    <property type="term" value="F:DNA-binding transcription factor activity, RNA polymerase II-specific"/>
    <property type="evidence" value="ECO:0000255"/>
    <property type="project" value="PomBase"/>
</dbReference>
<dbReference type="GO" id="GO:0000978">
    <property type="term" value="F:RNA polymerase II cis-regulatory region sequence-specific DNA binding"/>
    <property type="evidence" value="ECO:0000255"/>
    <property type="project" value="PomBase"/>
</dbReference>
<dbReference type="GO" id="GO:0008270">
    <property type="term" value="F:zinc ion binding"/>
    <property type="evidence" value="ECO:0000255"/>
    <property type="project" value="PomBase"/>
</dbReference>
<dbReference type="GO" id="GO:0006351">
    <property type="term" value="P:DNA-templated transcription"/>
    <property type="evidence" value="ECO:0007669"/>
    <property type="project" value="InterPro"/>
</dbReference>
<dbReference type="GO" id="GO:0006357">
    <property type="term" value="P:regulation of transcription by RNA polymerase II"/>
    <property type="evidence" value="ECO:0000255"/>
    <property type="project" value="PomBase"/>
</dbReference>
<dbReference type="CDD" id="cd12148">
    <property type="entry name" value="fungal_TF_MHR"/>
    <property type="match status" value="1"/>
</dbReference>
<dbReference type="CDD" id="cd00067">
    <property type="entry name" value="GAL4"/>
    <property type="match status" value="1"/>
</dbReference>
<dbReference type="Gene3D" id="4.10.240.10">
    <property type="entry name" value="Zn(2)-C6 fungal-type DNA-binding domain"/>
    <property type="match status" value="1"/>
</dbReference>
<dbReference type="InterPro" id="IPR050797">
    <property type="entry name" value="Carb_Metab_Trans_Reg"/>
</dbReference>
<dbReference type="InterPro" id="IPR007219">
    <property type="entry name" value="Transcription_factor_dom_fun"/>
</dbReference>
<dbReference type="InterPro" id="IPR036864">
    <property type="entry name" value="Zn2-C6_fun-type_DNA-bd_sf"/>
</dbReference>
<dbReference type="InterPro" id="IPR001138">
    <property type="entry name" value="Zn2Cys6_DnaBD"/>
</dbReference>
<dbReference type="PANTHER" id="PTHR31668:SF26">
    <property type="entry name" value="GLUCOSE TRANSPORT TRANSCRIPTION REGULATOR RGT1-RELATED"/>
    <property type="match status" value="1"/>
</dbReference>
<dbReference type="PANTHER" id="PTHR31668">
    <property type="entry name" value="GLUCOSE TRANSPORT TRANSCRIPTION REGULATOR RGT1-RELATED-RELATED"/>
    <property type="match status" value="1"/>
</dbReference>
<dbReference type="Pfam" id="PF04082">
    <property type="entry name" value="Fungal_trans"/>
    <property type="match status" value="1"/>
</dbReference>
<dbReference type="Pfam" id="PF00172">
    <property type="entry name" value="Zn_clus"/>
    <property type="match status" value="1"/>
</dbReference>
<dbReference type="SMART" id="SM00066">
    <property type="entry name" value="GAL4"/>
    <property type="match status" value="1"/>
</dbReference>
<dbReference type="SUPFAM" id="SSF57701">
    <property type="entry name" value="Zn2/Cys6 DNA-binding domain"/>
    <property type="match status" value="1"/>
</dbReference>
<dbReference type="PROSITE" id="PS00463">
    <property type="entry name" value="ZN2_CY6_FUNGAL_1"/>
    <property type="match status" value="1"/>
</dbReference>
<dbReference type="PROSITE" id="PS50048">
    <property type="entry name" value="ZN2_CY6_FUNGAL_2"/>
    <property type="match status" value="1"/>
</dbReference>